<sequence>MAQPRIPAARGAAASLQAQNGAASASGSPYTNGPVHNTLMSPQVSSSQGYDSQPPGSYPRPMPAKTLNPFSAQSNYGGSQGSGQTLNSPLVTSGPVLPSLHSGPVPRMPLPTSQNPAATPMPSGSFLPGANPPPPLNWQYNYPSTGPQTNHFPHVAPPTLPGNPNLTADHQYVSSGDPALQTSFKKPGSALPLQNPPLPPTFQPGAPPGPPPAGGPPPSRGPAPQKTPPRAAPPPSFNSAVNQEGITSNANNGSTAAHNTYDEIEGGGFLATPQLVNQNPKTSRSVGSAYPSLPPGYQNSAPPVAGMPPPSLSYPSGPQAFTQTPLGANHLTASMSGLSLHPEGLRVVNLLQERNMLPSTPLQPPVPNLLEDIQKLNCNPELFRCTLTSVPQTQALLNKAKLPLGLLLHPFKDLVQLPVVTSSTIVRCRSCRTYINPFVNFLDQRRWKCNLCYRVNDVPEEFMYNPLTRVYGEPHKRPEVQNATIEFMAPSEYMLRPPQPPVYLFVFDVSHNAIETGYLNSVCQSLLDNLDLLPGNTRTKIGFITFDSTIHFYSLQEGLSQPQMLIVSDIDDVFIPMPENLLVNLNESKELVQDLLKTLPQMFTKTLETQSALGPALQAAFKLISPTGGRMSVFQTQLPTLGVGALKPREEPNQRSSAKEIHLTPSTDFYKKLALDCSGQQAAVDLFLLSGQYSDLASLGCISRYSAGSVYYYPSYHHQHNPVQVQKLQKELHRYLTRKIGFEAVMRIRCTKGLSIHTFHGNFFVRSTDLLSLPNVNPDAGYAVQMSVEESLTDTQLVSFQSALLYTSSKGERRIRVHTLCLPVVSTLNEVFLGADVQAISGLLANMAVDRSVTASLSDARDALVNAVIDSLSAYRSSVLSGQQPGLMVPFSLRLFPLFVLALLKQKSFQTGTSIRLDERIFAMCQVKSQPLVHLMLTTHPSLYRVDNLSDEGALNINDRTIPQPPILQLSVEKLSRDGAFLMDAGSLLMLWVGRNCSQNFLSQVLGVQNYASIPQTMTDLPELDTPESARIAAFISWLREQRPFFPVLYVIREESLMKAAFLQSLVEDRTESALSYYEFLLHIQQQVNK</sequence>
<evidence type="ECO:0000250" key="1">
    <source>
        <dbReference type="UniProtKB" id="O95486"/>
    </source>
</evidence>
<evidence type="ECO:0000255" key="2"/>
<evidence type="ECO:0000256" key="3">
    <source>
        <dbReference type="SAM" id="MobiDB-lite"/>
    </source>
</evidence>
<evidence type="ECO:0000303" key="4">
    <source>
    </source>
</evidence>
<evidence type="ECO:0000305" key="5"/>
<evidence type="ECO:0000312" key="6">
    <source>
        <dbReference type="MGI" id="MGI:1924621"/>
    </source>
</evidence>
<feature type="chain" id="PRO_0000205154" description="Protein transport protein Sec24A">
    <location>
        <begin position="1"/>
        <end position="1090"/>
    </location>
</feature>
<feature type="repeat" description="Gelsolin-like" evidence="2">
    <location>
        <begin position="963"/>
        <end position="1036"/>
    </location>
</feature>
<feature type="region of interest" description="Disordered" evidence="3">
    <location>
        <begin position="1"/>
        <end position="260"/>
    </location>
</feature>
<feature type="region of interest" description="Disordered" evidence="3">
    <location>
        <begin position="272"/>
        <end position="325"/>
    </location>
</feature>
<feature type="region of interest" description="Zinc finger-like">
    <location>
        <begin position="428"/>
        <end position="452"/>
    </location>
</feature>
<feature type="compositionally biased region" description="Low complexity" evidence="3">
    <location>
        <begin position="8"/>
        <end position="28"/>
    </location>
</feature>
<feature type="compositionally biased region" description="Polar residues" evidence="3">
    <location>
        <begin position="29"/>
        <end position="55"/>
    </location>
</feature>
<feature type="compositionally biased region" description="Polar residues" evidence="3">
    <location>
        <begin position="138"/>
        <end position="151"/>
    </location>
</feature>
<feature type="compositionally biased region" description="Polar residues" evidence="3">
    <location>
        <begin position="162"/>
        <end position="184"/>
    </location>
</feature>
<feature type="compositionally biased region" description="Pro residues" evidence="3">
    <location>
        <begin position="194"/>
        <end position="236"/>
    </location>
</feature>
<feature type="compositionally biased region" description="Polar residues" evidence="3">
    <location>
        <begin position="237"/>
        <end position="258"/>
    </location>
</feature>
<feature type="compositionally biased region" description="Polar residues" evidence="3">
    <location>
        <begin position="274"/>
        <end position="286"/>
    </location>
</feature>
<feature type="compositionally biased region" description="Polar residues" evidence="3">
    <location>
        <begin position="313"/>
        <end position="325"/>
    </location>
</feature>
<feature type="binding site" evidence="1">
    <location>
        <position position="428"/>
    </location>
    <ligand>
        <name>Zn(2+)</name>
        <dbReference type="ChEBI" id="CHEBI:29105"/>
    </ligand>
</feature>
<feature type="binding site" evidence="1">
    <location>
        <position position="431"/>
    </location>
    <ligand>
        <name>Zn(2+)</name>
        <dbReference type="ChEBI" id="CHEBI:29105"/>
    </ligand>
</feature>
<feature type="binding site" evidence="1">
    <location>
        <position position="449"/>
    </location>
    <ligand>
        <name>Zn(2+)</name>
        <dbReference type="ChEBI" id="CHEBI:29105"/>
    </ligand>
</feature>
<feature type="binding site" evidence="1">
    <location>
        <position position="452"/>
    </location>
    <ligand>
        <name>Zn(2+)</name>
        <dbReference type="ChEBI" id="CHEBI:29105"/>
    </ligand>
</feature>
<feature type="splice variant" id="VSP_016990" description="In isoform 2." evidence="4">
    <original>DVFIPMPENLLVNLNESKELV</original>
    <variation>GMCYTQTHSTSWRIVPFRNVS</variation>
    <location>
        <begin position="572"/>
        <end position="592"/>
    </location>
</feature>
<feature type="splice variant" id="VSP_016991" description="In isoform 2." evidence="4">
    <location>
        <begin position="593"/>
        <end position="1090"/>
    </location>
</feature>
<feature type="sequence conflict" description="In Ref. 1; BAE37580." evidence="5" ref="1">
    <location>
        <position position="416"/>
    </location>
</feature>
<feature type="sequence conflict" description="In Ref. 1; BAC26319." evidence="5" ref="1">
    <original>T</original>
    <variation>K</variation>
    <location>
        <position position="939"/>
    </location>
</feature>
<feature type="sequence conflict" description="In Ref. 1; BAC26319." evidence="5" ref="1">
    <original>W</original>
    <variation>R</variation>
    <location>
        <position position="1038"/>
    </location>
</feature>
<keyword id="KW-0025">Alternative splicing</keyword>
<keyword id="KW-0963">Cytoplasm</keyword>
<keyword id="KW-0968">Cytoplasmic vesicle</keyword>
<keyword id="KW-0256">Endoplasmic reticulum</keyword>
<keyword id="KW-0931">ER-Golgi transport</keyword>
<keyword id="KW-0472">Membrane</keyword>
<keyword id="KW-0479">Metal-binding</keyword>
<keyword id="KW-0653">Protein transport</keyword>
<keyword id="KW-1185">Reference proteome</keyword>
<keyword id="KW-0813">Transport</keyword>
<keyword id="KW-0862">Zinc</keyword>
<name>SC24A_MOUSE</name>
<gene>
    <name evidence="6" type="primary">Sec24a</name>
</gene>
<dbReference type="EMBL" id="AK029139">
    <property type="protein sequence ID" value="BAC26319.1"/>
    <property type="status" value="ALT_SEQ"/>
    <property type="molecule type" value="mRNA"/>
</dbReference>
<dbReference type="EMBL" id="AK155182">
    <property type="protein sequence ID" value="BAE33099.1"/>
    <property type="molecule type" value="mRNA"/>
</dbReference>
<dbReference type="EMBL" id="AK162795">
    <property type="protein sequence ID" value="BAE37062.1"/>
    <property type="molecule type" value="mRNA"/>
</dbReference>
<dbReference type="EMBL" id="AK163998">
    <property type="protein sequence ID" value="BAE37580.1"/>
    <property type="molecule type" value="mRNA"/>
</dbReference>
<dbReference type="EMBL" id="AL645602">
    <property type="status" value="NOT_ANNOTATED_CDS"/>
    <property type="molecule type" value="Genomic_DNA"/>
</dbReference>
<dbReference type="EMBL" id="BC117905">
    <property type="protein sequence ID" value="AAI17906.1"/>
    <property type="molecule type" value="mRNA"/>
</dbReference>
<dbReference type="CCDS" id="CCDS24660.2">
    <molecule id="Q3U2P1-1"/>
</dbReference>
<dbReference type="RefSeq" id="NP_001277714.1">
    <property type="nucleotide sequence ID" value="NM_001290785.1"/>
</dbReference>
<dbReference type="RefSeq" id="NP_780464.2">
    <molecule id="Q3U2P1-1"/>
    <property type="nucleotide sequence ID" value="NM_175255.3"/>
</dbReference>
<dbReference type="SMR" id="Q3U2P1"/>
<dbReference type="BioGRID" id="218649">
    <property type="interactions" value="10"/>
</dbReference>
<dbReference type="FunCoup" id="Q3U2P1">
    <property type="interactions" value="2460"/>
</dbReference>
<dbReference type="STRING" id="10090.ENSMUSP00000104725"/>
<dbReference type="GlyGen" id="Q3U2P1">
    <property type="glycosylation" value="3 sites, 1 N-linked glycan (1 site), 1 O-linked glycan (1 site)"/>
</dbReference>
<dbReference type="iPTMnet" id="Q3U2P1"/>
<dbReference type="PhosphoSitePlus" id="Q3U2P1"/>
<dbReference type="SwissPalm" id="Q3U2P1"/>
<dbReference type="jPOST" id="Q3U2P1"/>
<dbReference type="PaxDb" id="10090-ENSMUSP00000104725"/>
<dbReference type="PeptideAtlas" id="Q3U2P1"/>
<dbReference type="ProteomicsDB" id="255343">
    <molecule id="Q3U2P1-1"/>
</dbReference>
<dbReference type="ProteomicsDB" id="255344">
    <molecule id="Q3U2P1-2"/>
</dbReference>
<dbReference type="Pumba" id="Q3U2P1"/>
<dbReference type="Antibodypedia" id="45232">
    <property type="antibodies" value="106 antibodies from 24 providers"/>
</dbReference>
<dbReference type="DNASU" id="77371"/>
<dbReference type="Ensembl" id="ENSMUST00000064297.5">
    <molecule id="Q3U2P1-2"/>
    <property type="protein sequence ID" value="ENSMUSP00000068065.5"/>
    <property type="gene ID" value="ENSMUSG00000036391.17"/>
</dbReference>
<dbReference type="Ensembl" id="ENSMUST00000109097.9">
    <molecule id="Q3U2P1-1"/>
    <property type="protein sequence ID" value="ENSMUSP00000104725.3"/>
    <property type="gene ID" value="ENSMUSG00000036391.17"/>
</dbReference>
<dbReference type="GeneID" id="77371"/>
<dbReference type="KEGG" id="mmu:77371"/>
<dbReference type="UCSC" id="uc007iui.1">
    <molecule id="Q3U2P1-1"/>
    <property type="organism name" value="mouse"/>
</dbReference>
<dbReference type="UCSC" id="uc007iul.1">
    <molecule id="Q3U2P1-2"/>
    <property type="organism name" value="mouse"/>
</dbReference>
<dbReference type="AGR" id="MGI:1924621"/>
<dbReference type="CTD" id="10802"/>
<dbReference type="MGI" id="MGI:1924621">
    <property type="gene designation" value="Sec24a"/>
</dbReference>
<dbReference type="VEuPathDB" id="HostDB:ENSMUSG00000036391"/>
<dbReference type="eggNOG" id="KOG1985">
    <property type="taxonomic scope" value="Eukaryota"/>
</dbReference>
<dbReference type="GeneTree" id="ENSGT00950000182924"/>
<dbReference type="HOGENOM" id="CLU_004589_2_0_1"/>
<dbReference type="InParanoid" id="Q3U2P1"/>
<dbReference type="OMA" id="AVECSKQ"/>
<dbReference type="OrthoDB" id="49016at2759"/>
<dbReference type="PhylomeDB" id="Q3U2P1"/>
<dbReference type="TreeFam" id="TF350406"/>
<dbReference type="Reactome" id="R-MMU-204005">
    <property type="pathway name" value="COPII-mediated vesicle transport"/>
</dbReference>
<dbReference type="Reactome" id="R-MMU-2132295">
    <property type="pathway name" value="MHC class II antigen presentation"/>
</dbReference>
<dbReference type="Reactome" id="R-MMU-5694530">
    <property type="pathway name" value="Cargo concentration in the ER"/>
</dbReference>
<dbReference type="Reactome" id="R-MMU-983170">
    <property type="pathway name" value="Antigen Presentation: Folding, assembly and peptide loading of class I MHC"/>
</dbReference>
<dbReference type="BioGRID-ORCS" id="77371">
    <property type="hits" value="3 hits in 77 CRISPR screens"/>
</dbReference>
<dbReference type="ChiTaRS" id="Sec24a">
    <property type="organism name" value="mouse"/>
</dbReference>
<dbReference type="PRO" id="PR:Q3U2P1"/>
<dbReference type="Proteomes" id="UP000000589">
    <property type="component" value="Chromosome 11"/>
</dbReference>
<dbReference type="RNAct" id="Q3U2P1">
    <property type="molecule type" value="protein"/>
</dbReference>
<dbReference type="Bgee" id="ENSMUSG00000036391">
    <property type="expression patterns" value="Expressed in epithelium of small intestine and 225 other cell types or tissues"/>
</dbReference>
<dbReference type="ExpressionAtlas" id="Q3U2P1">
    <property type="expression patterns" value="baseline and differential"/>
</dbReference>
<dbReference type="GO" id="GO:0030127">
    <property type="term" value="C:COPII vesicle coat"/>
    <property type="evidence" value="ECO:0000250"/>
    <property type="project" value="UniProtKB"/>
</dbReference>
<dbReference type="GO" id="GO:0005829">
    <property type="term" value="C:cytosol"/>
    <property type="evidence" value="ECO:0007669"/>
    <property type="project" value="UniProtKB-SubCell"/>
</dbReference>
<dbReference type="GO" id="GO:0005789">
    <property type="term" value="C:endoplasmic reticulum membrane"/>
    <property type="evidence" value="ECO:0007669"/>
    <property type="project" value="UniProtKB-SubCell"/>
</dbReference>
<dbReference type="GO" id="GO:0008270">
    <property type="term" value="F:zinc ion binding"/>
    <property type="evidence" value="ECO:0007669"/>
    <property type="project" value="Ensembl"/>
</dbReference>
<dbReference type="GO" id="GO:0042632">
    <property type="term" value="P:cholesterol homeostasis"/>
    <property type="evidence" value="ECO:0000315"/>
    <property type="project" value="MGI"/>
</dbReference>
<dbReference type="GO" id="GO:0090110">
    <property type="term" value="P:COPII-coated vesicle cargo loading"/>
    <property type="evidence" value="ECO:0000250"/>
    <property type="project" value="UniProtKB"/>
</dbReference>
<dbReference type="GO" id="GO:0006888">
    <property type="term" value="P:endoplasmic reticulum to Golgi vesicle-mediated transport"/>
    <property type="evidence" value="ECO:0000250"/>
    <property type="project" value="UniProtKB"/>
</dbReference>
<dbReference type="GO" id="GO:0006886">
    <property type="term" value="P:intracellular protein transport"/>
    <property type="evidence" value="ECO:0007669"/>
    <property type="project" value="InterPro"/>
</dbReference>
<dbReference type="GO" id="GO:0050714">
    <property type="term" value="P:positive regulation of protein secretion"/>
    <property type="evidence" value="ECO:0000315"/>
    <property type="project" value="MGI"/>
</dbReference>
<dbReference type="GO" id="GO:0032374">
    <property type="term" value="P:regulation of cholesterol transport"/>
    <property type="evidence" value="ECO:0000315"/>
    <property type="project" value="MGI"/>
</dbReference>
<dbReference type="CDD" id="cd01479">
    <property type="entry name" value="Sec24-like"/>
    <property type="match status" value="1"/>
</dbReference>
<dbReference type="FunFam" id="2.30.30.380:FF:000004">
    <property type="entry name" value="SEC24 homolog B, COPII coat complex component"/>
    <property type="match status" value="1"/>
</dbReference>
<dbReference type="FunFam" id="3.40.50.410:FF:000019">
    <property type="entry name" value="SEC24 homolog B, COPII coat complex component"/>
    <property type="match status" value="1"/>
</dbReference>
<dbReference type="Gene3D" id="2.60.40.1670">
    <property type="entry name" value="beta-sandwich domain of Sec23/24"/>
    <property type="match status" value="1"/>
</dbReference>
<dbReference type="Gene3D" id="1.20.120.730">
    <property type="entry name" value="Sec23/Sec24 helical domain"/>
    <property type="match status" value="1"/>
</dbReference>
<dbReference type="Gene3D" id="3.40.20.10">
    <property type="entry name" value="Severin"/>
    <property type="match status" value="1"/>
</dbReference>
<dbReference type="Gene3D" id="3.40.50.410">
    <property type="entry name" value="von Willebrand factor, type A domain"/>
    <property type="match status" value="1"/>
</dbReference>
<dbReference type="Gene3D" id="2.30.30.380">
    <property type="entry name" value="Zn-finger domain of Sec23/24"/>
    <property type="match status" value="1"/>
</dbReference>
<dbReference type="InterPro" id="IPR029006">
    <property type="entry name" value="ADF-H/Gelsolin-like_dom_sf"/>
</dbReference>
<dbReference type="InterPro" id="IPR007123">
    <property type="entry name" value="Gelsolin-like_dom"/>
</dbReference>
<dbReference type="InterPro" id="IPR036180">
    <property type="entry name" value="Gelsolin-like_dom_sf"/>
</dbReference>
<dbReference type="InterPro" id="IPR006900">
    <property type="entry name" value="Sec23/24_helical_dom"/>
</dbReference>
<dbReference type="InterPro" id="IPR036175">
    <property type="entry name" value="Sec23/24_helical_dom_sf"/>
</dbReference>
<dbReference type="InterPro" id="IPR006896">
    <property type="entry name" value="Sec23/24_trunk_dom"/>
</dbReference>
<dbReference type="InterPro" id="IPR012990">
    <property type="entry name" value="Sec23_24_beta_S"/>
</dbReference>
<dbReference type="InterPro" id="IPR050550">
    <property type="entry name" value="SEC23_SEC24_subfamily"/>
</dbReference>
<dbReference type="InterPro" id="IPR041742">
    <property type="entry name" value="Sec24-like_trunk_dom"/>
</dbReference>
<dbReference type="InterPro" id="IPR036465">
    <property type="entry name" value="vWFA_dom_sf"/>
</dbReference>
<dbReference type="InterPro" id="IPR006895">
    <property type="entry name" value="Znf_Sec23_Sec24"/>
</dbReference>
<dbReference type="InterPro" id="IPR036174">
    <property type="entry name" value="Znf_Sec23_Sec24_sf"/>
</dbReference>
<dbReference type="PANTHER" id="PTHR13803:SF1">
    <property type="entry name" value="PROTEIN TRANSPORT PROTEIN SEC24A"/>
    <property type="match status" value="1"/>
</dbReference>
<dbReference type="PANTHER" id="PTHR13803">
    <property type="entry name" value="SEC24-RELATED PROTEIN"/>
    <property type="match status" value="1"/>
</dbReference>
<dbReference type="Pfam" id="PF00626">
    <property type="entry name" value="Gelsolin"/>
    <property type="match status" value="1"/>
</dbReference>
<dbReference type="Pfam" id="PF08033">
    <property type="entry name" value="Sec23_BS"/>
    <property type="match status" value="1"/>
</dbReference>
<dbReference type="Pfam" id="PF04815">
    <property type="entry name" value="Sec23_helical"/>
    <property type="match status" value="1"/>
</dbReference>
<dbReference type="Pfam" id="PF04811">
    <property type="entry name" value="Sec23_trunk"/>
    <property type="match status" value="1"/>
</dbReference>
<dbReference type="Pfam" id="PF04810">
    <property type="entry name" value="zf-Sec23_Sec24"/>
    <property type="match status" value="1"/>
</dbReference>
<dbReference type="SUPFAM" id="SSF81995">
    <property type="entry name" value="beta-sandwich domain of Sec23/24"/>
    <property type="match status" value="1"/>
</dbReference>
<dbReference type="SUPFAM" id="SSF82754">
    <property type="entry name" value="C-terminal, gelsolin-like domain of Sec23/24"/>
    <property type="match status" value="1"/>
</dbReference>
<dbReference type="SUPFAM" id="SSF81811">
    <property type="entry name" value="Helical domain of Sec23/24"/>
    <property type="match status" value="1"/>
</dbReference>
<dbReference type="SUPFAM" id="SSF53300">
    <property type="entry name" value="vWA-like"/>
    <property type="match status" value="1"/>
</dbReference>
<dbReference type="SUPFAM" id="SSF82919">
    <property type="entry name" value="Zn-finger domain of Sec23/24"/>
    <property type="match status" value="1"/>
</dbReference>
<proteinExistence type="evidence at protein level"/>
<organism>
    <name type="scientific">Mus musculus</name>
    <name type="common">Mouse</name>
    <dbReference type="NCBI Taxonomy" id="10090"/>
    <lineage>
        <taxon>Eukaryota</taxon>
        <taxon>Metazoa</taxon>
        <taxon>Chordata</taxon>
        <taxon>Craniata</taxon>
        <taxon>Vertebrata</taxon>
        <taxon>Euteleostomi</taxon>
        <taxon>Mammalia</taxon>
        <taxon>Eutheria</taxon>
        <taxon>Euarchontoglires</taxon>
        <taxon>Glires</taxon>
        <taxon>Rodentia</taxon>
        <taxon>Myomorpha</taxon>
        <taxon>Muroidea</taxon>
        <taxon>Muridae</taxon>
        <taxon>Murinae</taxon>
        <taxon>Mus</taxon>
        <taxon>Mus</taxon>
    </lineage>
</organism>
<accession>Q3U2P1</accession>
<accession>A2AA70</accession>
<accession>A2AA73</accession>
<accession>A4FUV4</accession>
<accession>Q3TQ05</accession>
<accession>Q3TRG7</accession>
<accession>Q8BIS0</accession>
<comment type="function">
    <text evidence="1">Component of the coat protein complex II (COPII) which promotes the formation of transport vesicles from the endoplasmic reticulum (ER). The coat has two main functions, the physical deformation of the endoplasmic reticulum membrane into vesicles and the selection of cargo molecules for their transport to the Golgi complex. Plays a central role in cargo selection within the COPII complex and together with SEC24B may have a different specificity compared to SEC24C and SEC24D. May package preferentially cargos with cytoplasmic DxE or LxxLE motifs and may also recognize conformational epitopes.</text>
</comment>
<comment type="subunit">
    <text evidence="1">COPII is composed of at least five proteins: the Sec23/24 complex, the Sec13/31 complex and Sar1. Interacts with TMED2. Interacts (as part of the Sec23/24 complex) with SEC22B; recruits SEC22B into COPII-coated vesicles for its transport from the endoplasmic reticulum to the Golgi (By similarity). Interacts with STING1; promoting STING1 translocation to COPII vesicles in a STEEP1-dependent manner (By similarity). Interacts with TMEM39A (By similarity). Interacts with SACM1L; this interaction is reduced in the absence of TMEM39A (By similarity). Interacts with kinase FAM20C; transport of FAM20C from the endoplasmic reticulum to the Golgi is likely to be mediated by COPII vesicles (By similarity).</text>
</comment>
<comment type="subcellular location">
    <subcellularLocation>
        <location evidence="1">Cytoplasmic vesicle</location>
        <location evidence="1">COPII-coated vesicle membrane</location>
        <topology evidence="1">Peripheral membrane protein</topology>
        <orientation evidence="1">Cytoplasmic side</orientation>
    </subcellularLocation>
    <subcellularLocation>
        <location evidence="1">Endoplasmic reticulum membrane</location>
        <topology evidence="1">Peripheral membrane protein</topology>
        <orientation evidence="1">Cytoplasmic side</orientation>
    </subcellularLocation>
    <subcellularLocation>
        <location evidence="1">Cytoplasm</location>
        <location evidence="1">Cytosol</location>
    </subcellularLocation>
</comment>
<comment type="alternative products">
    <event type="alternative splicing"/>
    <isoform>
        <id>Q3U2P1-1</id>
        <name>1</name>
        <sequence type="displayed"/>
    </isoform>
    <isoform>
        <id>Q3U2P1-2</id>
        <name>2</name>
        <sequence type="described" ref="VSP_016990 VSP_016991"/>
    </isoform>
</comment>
<comment type="similarity">
    <text evidence="5">Belongs to the SEC23/SEC24 family. SEC24 subfamily.</text>
</comment>
<comment type="sequence caution" evidence="5">
    <conflict type="frameshift">
        <sequence resource="EMBL-CDS" id="BAC26319"/>
    </conflict>
</comment>
<protein>
    <recommendedName>
        <fullName evidence="5">Protein transport protein Sec24A</fullName>
    </recommendedName>
    <alternativeName>
        <fullName>SEC24-related protein A</fullName>
    </alternativeName>
</protein>
<reference key="1">
    <citation type="journal article" date="2005" name="Science">
        <title>The transcriptional landscape of the mammalian genome.</title>
        <authorList>
            <person name="Carninci P."/>
            <person name="Kasukawa T."/>
            <person name="Katayama S."/>
            <person name="Gough J."/>
            <person name="Frith M.C."/>
            <person name="Maeda N."/>
            <person name="Oyama R."/>
            <person name="Ravasi T."/>
            <person name="Lenhard B."/>
            <person name="Wells C."/>
            <person name="Kodzius R."/>
            <person name="Shimokawa K."/>
            <person name="Bajic V.B."/>
            <person name="Brenner S.E."/>
            <person name="Batalov S."/>
            <person name="Forrest A.R."/>
            <person name="Zavolan M."/>
            <person name="Davis M.J."/>
            <person name="Wilming L.G."/>
            <person name="Aidinis V."/>
            <person name="Allen J.E."/>
            <person name="Ambesi-Impiombato A."/>
            <person name="Apweiler R."/>
            <person name="Aturaliya R.N."/>
            <person name="Bailey T.L."/>
            <person name="Bansal M."/>
            <person name="Baxter L."/>
            <person name="Beisel K.W."/>
            <person name="Bersano T."/>
            <person name="Bono H."/>
            <person name="Chalk A.M."/>
            <person name="Chiu K.P."/>
            <person name="Choudhary V."/>
            <person name="Christoffels A."/>
            <person name="Clutterbuck D.R."/>
            <person name="Crowe M.L."/>
            <person name="Dalla E."/>
            <person name="Dalrymple B.P."/>
            <person name="de Bono B."/>
            <person name="Della Gatta G."/>
            <person name="di Bernardo D."/>
            <person name="Down T."/>
            <person name="Engstrom P."/>
            <person name="Fagiolini M."/>
            <person name="Faulkner G."/>
            <person name="Fletcher C.F."/>
            <person name="Fukushima T."/>
            <person name="Furuno M."/>
            <person name="Futaki S."/>
            <person name="Gariboldi M."/>
            <person name="Georgii-Hemming P."/>
            <person name="Gingeras T.R."/>
            <person name="Gojobori T."/>
            <person name="Green R.E."/>
            <person name="Gustincich S."/>
            <person name="Harbers M."/>
            <person name="Hayashi Y."/>
            <person name="Hensch T.K."/>
            <person name="Hirokawa N."/>
            <person name="Hill D."/>
            <person name="Huminiecki L."/>
            <person name="Iacono M."/>
            <person name="Ikeo K."/>
            <person name="Iwama A."/>
            <person name="Ishikawa T."/>
            <person name="Jakt M."/>
            <person name="Kanapin A."/>
            <person name="Katoh M."/>
            <person name="Kawasawa Y."/>
            <person name="Kelso J."/>
            <person name="Kitamura H."/>
            <person name="Kitano H."/>
            <person name="Kollias G."/>
            <person name="Krishnan S.P."/>
            <person name="Kruger A."/>
            <person name="Kummerfeld S.K."/>
            <person name="Kurochkin I.V."/>
            <person name="Lareau L.F."/>
            <person name="Lazarevic D."/>
            <person name="Lipovich L."/>
            <person name="Liu J."/>
            <person name="Liuni S."/>
            <person name="McWilliam S."/>
            <person name="Madan Babu M."/>
            <person name="Madera M."/>
            <person name="Marchionni L."/>
            <person name="Matsuda H."/>
            <person name="Matsuzawa S."/>
            <person name="Miki H."/>
            <person name="Mignone F."/>
            <person name="Miyake S."/>
            <person name="Morris K."/>
            <person name="Mottagui-Tabar S."/>
            <person name="Mulder N."/>
            <person name="Nakano N."/>
            <person name="Nakauchi H."/>
            <person name="Ng P."/>
            <person name="Nilsson R."/>
            <person name="Nishiguchi S."/>
            <person name="Nishikawa S."/>
            <person name="Nori F."/>
            <person name="Ohara O."/>
            <person name="Okazaki Y."/>
            <person name="Orlando V."/>
            <person name="Pang K.C."/>
            <person name="Pavan W.J."/>
            <person name="Pavesi G."/>
            <person name="Pesole G."/>
            <person name="Petrovsky N."/>
            <person name="Piazza S."/>
            <person name="Reed J."/>
            <person name="Reid J.F."/>
            <person name="Ring B.Z."/>
            <person name="Ringwald M."/>
            <person name="Rost B."/>
            <person name="Ruan Y."/>
            <person name="Salzberg S.L."/>
            <person name="Sandelin A."/>
            <person name="Schneider C."/>
            <person name="Schoenbach C."/>
            <person name="Sekiguchi K."/>
            <person name="Semple C.A."/>
            <person name="Seno S."/>
            <person name="Sessa L."/>
            <person name="Sheng Y."/>
            <person name="Shibata Y."/>
            <person name="Shimada H."/>
            <person name="Shimada K."/>
            <person name="Silva D."/>
            <person name="Sinclair B."/>
            <person name="Sperling S."/>
            <person name="Stupka E."/>
            <person name="Sugiura K."/>
            <person name="Sultana R."/>
            <person name="Takenaka Y."/>
            <person name="Taki K."/>
            <person name="Tammoja K."/>
            <person name="Tan S.L."/>
            <person name="Tang S."/>
            <person name="Taylor M.S."/>
            <person name="Tegner J."/>
            <person name="Teichmann S.A."/>
            <person name="Ueda H.R."/>
            <person name="van Nimwegen E."/>
            <person name="Verardo R."/>
            <person name="Wei C.L."/>
            <person name="Yagi K."/>
            <person name="Yamanishi H."/>
            <person name="Zabarovsky E."/>
            <person name="Zhu S."/>
            <person name="Zimmer A."/>
            <person name="Hide W."/>
            <person name="Bult C."/>
            <person name="Grimmond S.M."/>
            <person name="Teasdale R.D."/>
            <person name="Liu E.T."/>
            <person name="Brusic V."/>
            <person name="Quackenbush J."/>
            <person name="Wahlestedt C."/>
            <person name="Mattick J.S."/>
            <person name="Hume D.A."/>
            <person name="Kai C."/>
            <person name="Sasaki D."/>
            <person name="Tomaru Y."/>
            <person name="Fukuda S."/>
            <person name="Kanamori-Katayama M."/>
            <person name="Suzuki M."/>
            <person name="Aoki J."/>
            <person name="Arakawa T."/>
            <person name="Iida J."/>
            <person name="Imamura K."/>
            <person name="Itoh M."/>
            <person name="Kato T."/>
            <person name="Kawaji H."/>
            <person name="Kawagashira N."/>
            <person name="Kawashima T."/>
            <person name="Kojima M."/>
            <person name="Kondo S."/>
            <person name="Konno H."/>
            <person name="Nakano K."/>
            <person name="Ninomiya N."/>
            <person name="Nishio T."/>
            <person name="Okada M."/>
            <person name="Plessy C."/>
            <person name="Shibata K."/>
            <person name="Shiraki T."/>
            <person name="Suzuki S."/>
            <person name="Tagami M."/>
            <person name="Waki K."/>
            <person name="Watahiki A."/>
            <person name="Okamura-Oho Y."/>
            <person name="Suzuki H."/>
            <person name="Kawai J."/>
            <person name="Hayashizaki Y."/>
        </authorList>
    </citation>
    <scope>NUCLEOTIDE SEQUENCE [LARGE SCALE MRNA] (ISOFORMS 1 AND 2)</scope>
    <source>
        <strain>C57BL/6J</strain>
        <strain>NOD</strain>
        <tissue>Dendritic cell</tissue>
        <tissue>Skin</tissue>
        <tissue>Thymus</tissue>
    </source>
</reference>
<reference key="2">
    <citation type="journal article" date="2009" name="PLoS Biol.">
        <title>Lineage-specific biology revealed by a finished genome assembly of the mouse.</title>
        <authorList>
            <person name="Church D.M."/>
            <person name="Goodstadt L."/>
            <person name="Hillier L.W."/>
            <person name="Zody M.C."/>
            <person name="Goldstein S."/>
            <person name="She X."/>
            <person name="Bult C.J."/>
            <person name="Agarwala R."/>
            <person name="Cherry J.L."/>
            <person name="DiCuccio M."/>
            <person name="Hlavina W."/>
            <person name="Kapustin Y."/>
            <person name="Meric P."/>
            <person name="Maglott D."/>
            <person name="Birtle Z."/>
            <person name="Marques A.C."/>
            <person name="Graves T."/>
            <person name="Zhou S."/>
            <person name="Teague B."/>
            <person name="Potamousis K."/>
            <person name="Churas C."/>
            <person name="Place M."/>
            <person name="Herschleb J."/>
            <person name="Runnheim R."/>
            <person name="Forrest D."/>
            <person name="Amos-Landgraf J."/>
            <person name="Schwartz D.C."/>
            <person name="Cheng Z."/>
            <person name="Lindblad-Toh K."/>
            <person name="Eichler E.E."/>
            <person name="Ponting C.P."/>
        </authorList>
    </citation>
    <scope>NUCLEOTIDE SEQUENCE [LARGE SCALE GENOMIC DNA]</scope>
    <source>
        <strain>C57BL/6J</strain>
    </source>
</reference>
<reference key="3">
    <citation type="journal article" date="2004" name="Genome Res.">
        <title>The status, quality, and expansion of the NIH full-length cDNA project: the Mammalian Gene Collection (MGC).</title>
        <authorList>
            <consortium name="The MGC Project Team"/>
        </authorList>
    </citation>
    <scope>NUCLEOTIDE SEQUENCE [LARGE SCALE MRNA] OF 26-1090</scope>
</reference>
<reference key="4">
    <citation type="journal article" date="2008" name="J. Proteome Res.">
        <title>Specific phosphopeptide enrichment with immobilized titanium ion affinity chromatography adsorbent for phosphoproteome analysis.</title>
        <authorList>
            <person name="Zhou H."/>
            <person name="Ye M."/>
            <person name="Dong J."/>
            <person name="Han G."/>
            <person name="Jiang X."/>
            <person name="Wu R."/>
            <person name="Zou H."/>
        </authorList>
    </citation>
    <scope>IDENTIFICATION BY MASS SPECTROMETRY [LARGE SCALE ANALYSIS]</scope>
    <source>
        <tissue>Liver</tissue>
    </source>
</reference>
<reference key="5">
    <citation type="journal article" date="2010" name="Cell">
        <title>A tissue-specific atlas of mouse protein phosphorylation and expression.</title>
        <authorList>
            <person name="Huttlin E.L."/>
            <person name="Jedrychowski M.P."/>
            <person name="Elias J.E."/>
            <person name="Goswami T."/>
            <person name="Rad R."/>
            <person name="Beausoleil S.A."/>
            <person name="Villen J."/>
            <person name="Haas W."/>
            <person name="Sowa M.E."/>
            <person name="Gygi S.P."/>
        </authorList>
    </citation>
    <scope>IDENTIFICATION BY MASS SPECTROMETRY [LARGE SCALE ANALYSIS]</scope>
    <source>
        <tissue>Brain</tissue>
        <tissue>Brown adipose tissue</tissue>
        <tissue>Heart</tissue>
        <tissue>Kidney</tissue>
        <tissue>Liver</tissue>
        <tissue>Lung</tissue>
        <tissue>Pancreas</tissue>
        <tissue>Spleen</tissue>
        <tissue>Testis</tissue>
    </source>
</reference>